<name>RL14_CUTAK</name>
<reference key="1">
    <citation type="journal article" date="2004" name="Science">
        <title>The complete genome sequence of Propionibacterium acnes, a commensal of human skin.</title>
        <authorList>
            <person name="Brueggemann H."/>
            <person name="Henne A."/>
            <person name="Hoster F."/>
            <person name="Liesegang H."/>
            <person name="Wiezer A."/>
            <person name="Strittmatter A."/>
            <person name="Hujer S."/>
            <person name="Duerre P."/>
            <person name="Gottschalk G."/>
        </authorList>
    </citation>
    <scope>NUCLEOTIDE SEQUENCE [LARGE SCALE GENOMIC DNA]</scope>
    <source>
        <strain>DSM 16379 / KPA171202</strain>
    </source>
</reference>
<gene>
    <name evidence="1" type="primary">rplN</name>
    <name type="ordered locus">PPA1852</name>
</gene>
<organism>
    <name type="scientific">Cutibacterium acnes (strain DSM 16379 / KPA171202)</name>
    <name type="common">Propionibacterium acnes</name>
    <dbReference type="NCBI Taxonomy" id="267747"/>
    <lineage>
        <taxon>Bacteria</taxon>
        <taxon>Bacillati</taxon>
        <taxon>Actinomycetota</taxon>
        <taxon>Actinomycetes</taxon>
        <taxon>Propionibacteriales</taxon>
        <taxon>Propionibacteriaceae</taxon>
        <taxon>Cutibacterium</taxon>
    </lineage>
</organism>
<protein>
    <recommendedName>
        <fullName evidence="1">Large ribosomal subunit protein uL14</fullName>
    </recommendedName>
    <alternativeName>
        <fullName evidence="2">50S ribosomal protein L14</fullName>
    </alternativeName>
</protein>
<dbReference type="EMBL" id="AE017283">
    <property type="protein sequence ID" value="AAT83577.1"/>
    <property type="molecule type" value="Genomic_DNA"/>
</dbReference>
<dbReference type="RefSeq" id="WP_002514859.1">
    <property type="nucleotide sequence ID" value="NZ_CP025935.1"/>
</dbReference>
<dbReference type="PDB" id="8CVM">
    <property type="method" value="EM"/>
    <property type="resolution" value="2.66 A"/>
    <property type="chains" value="j=1-122"/>
</dbReference>
<dbReference type="PDBsum" id="8CVM"/>
<dbReference type="SMR" id="Q6A6N6"/>
<dbReference type="EnsemblBacteria" id="AAT83577">
    <property type="protein sequence ID" value="AAT83577"/>
    <property type="gene ID" value="PPA1852"/>
</dbReference>
<dbReference type="GeneID" id="92857800"/>
<dbReference type="KEGG" id="pac:PPA1852"/>
<dbReference type="eggNOG" id="COG0093">
    <property type="taxonomic scope" value="Bacteria"/>
</dbReference>
<dbReference type="HOGENOM" id="CLU_095071_2_1_11"/>
<dbReference type="Proteomes" id="UP000000603">
    <property type="component" value="Chromosome"/>
</dbReference>
<dbReference type="GO" id="GO:0022625">
    <property type="term" value="C:cytosolic large ribosomal subunit"/>
    <property type="evidence" value="ECO:0007669"/>
    <property type="project" value="TreeGrafter"/>
</dbReference>
<dbReference type="GO" id="GO:0070180">
    <property type="term" value="F:large ribosomal subunit rRNA binding"/>
    <property type="evidence" value="ECO:0007669"/>
    <property type="project" value="TreeGrafter"/>
</dbReference>
<dbReference type="GO" id="GO:0003735">
    <property type="term" value="F:structural constituent of ribosome"/>
    <property type="evidence" value="ECO:0007669"/>
    <property type="project" value="InterPro"/>
</dbReference>
<dbReference type="GO" id="GO:0006412">
    <property type="term" value="P:translation"/>
    <property type="evidence" value="ECO:0007669"/>
    <property type="project" value="UniProtKB-UniRule"/>
</dbReference>
<dbReference type="CDD" id="cd00337">
    <property type="entry name" value="Ribosomal_uL14"/>
    <property type="match status" value="1"/>
</dbReference>
<dbReference type="FunFam" id="2.40.150.20:FF:000001">
    <property type="entry name" value="50S ribosomal protein L14"/>
    <property type="match status" value="1"/>
</dbReference>
<dbReference type="Gene3D" id="2.40.150.20">
    <property type="entry name" value="Ribosomal protein L14"/>
    <property type="match status" value="1"/>
</dbReference>
<dbReference type="HAMAP" id="MF_01367">
    <property type="entry name" value="Ribosomal_uL14"/>
    <property type="match status" value="1"/>
</dbReference>
<dbReference type="InterPro" id="IPR000218">
    <property type="entry name" value="Ribosomal_uL14"/>
</dbReference>
<dbReference type="InterPro" id="IPR005745">
    <property type="entry name" value="Ribosomal_uL14_bac-type"/>
</dbReference>
<dbReference type="InterPro" id="IPR019972">
    <property type="entry name" value="Ribosomal_uL14_CS"/>
</dbReference>
<dbReference type="InterPro" id="IPR036853">
    <property type="entry name" value="Ribosomal_uL14_sf"/>
</dbReference>
<dbReference type="NCBIfam" id="TIGR01067">
    <property type="entry name" value="rplN_bact"/>
    <property type="match status" value="1"/>
</dbReference>
<dbReference type="PANTHER" id="PTHR11761">
    <property type="entry name" value="50S/60S RIBOSOMAL PROTEIN L14/L23"/>
    <property type="match status" value="1"/>
</dbReference>
<dbReference type="PANTHER" id="PTHR11761:SF3">
    <property type="entry name" value="LARGE RIBOSOMAL SUBUNIT PROTEIN UL14M"/>
    <property type="match status" value="1"/>
</dbReference>
<dbReference type="Pfam" id="PF00238">
    <property type="entry name" value="Ribosomal_L14"/>
    <property type="match status" value="1"/>
</dbReference>
<dbReference type="SMART" id="SM01374">
    <property type="entry name" value="Ribosomal_L14"/>
    <property type="match status" value="1"/>
</dbReference>
<dbReference type="SUPFAM" id="SSF50193">
    <property type="entry name" value="Ribosomal protein L14"/>
    <property type="match status" value="1"/>
</dbReference>
<dbReference type="PROSITE" id="PS00049">
    <property type="entry name" value="RIBOSOMAL_L14"/>
    <property type="match status" value="1"/>
</dbReference>
<evidence type="ECO:0000255" key="1">
    <source>
        <dbReference type="HAMAP-Rule" id="MF_01367"/>
    </source>
</evidence>
<evidence type="ECO:0000305" key="2"/>
<evidence type="ECO:0007829" key="3">
    <source>
        <dbReference type="PDB" id="8CVM"/>
    </source>
</evidence>
<feature type="chain" id="PRO_0000266523" description="Large ribosomal subunit protein uL14">
    <location>
        <begin position="1"/>
        <end position="122"/>
    </location>
</feature>
<feature type="strand" evidence="3">
    <location>
        <begin position="7"/>
        <end position="10"/>
    </location>
</feature>
<feature type="strand" evidence="3">
    <location>
        <begin position="12"/>
        <end position="24"/>
    </location>
</feature>
<feature type="strand" evidence="3">
    <location>
        <begin position="38"/>
        <end position="46"/>
    </location>
</feature>
<feature type="strand" evidence="3">
    <location>
        <begin position="48"/>
        <end position="51"/>
    </location>
</feature>
<feature type="strand" evidence="3">
    <location>
        <begin position="57"/>
        <end position="63"/>
    </location>
</feature>
<feature type="strand" evidence="3">
    <location>
        <begin position="76"/>
        <end position="81"/>
    </location>
</feature>
<feature type="strand" evidence="3">
    <location>
        <begin position="83"/>
        <end position="87"/>
    </location>
</feature>
<feature type="strand" evidence="3">
    <location>
        <begin position="89"/>
        <end position="91"/>
    </location>
</feature>
<feature type="strand" evidence="3">
    <location>
        <begin position="93"/>
        <end position="96"/>
    </location>
</feature>
<feature type="strand" evidence="3">
    <location>
        <begin position="100"/>
        <end position="102"/>
    </location>
</feature>
<feature type="helix" evidence="3">
    <location>
        <begin position="104"/>
        <end position="107"/>
    </location>
</feature>
<feature type="turn" evidence="3">
    <location>
        <begin position="108"/>
        <end position="110"/>
    </location>
</feature>
<feature type="helix" evidence="3">
    <location>
        <begin position="112"/>
        <end position="117"/>
    </location>
</feature>
<feature type="strand" evidence="3">
    <location>
        <begin position="119"/>
        <end position="121"/>
    </location>
</feature>
<accession>Q6A6N6</accession>
<proteinExistence type="evidence at protein level"/>
<comment type="function">
    <text evidence="1">Binds to 23S rRNA. Forms part of two intersubunit bridges in the 70S ribosome.</text>
</comment>
<comment type="subunit">
    <text evidence="1">Part of the 50S ribosomal subunit. Forms a cluster with proteins L3 and L19. In the 70S ribosome, L14 and L19 interact and together make contacts with the 16S rRNA in bridges B5 and B8.</text>
</comment>
<comment type="similarity">
    <text evidence="1">Belongs to the universal ribosomal protein uL14 family.</text>
</comment>
<sequence length="122" mass="13479">MIQQETRLKVADNTGAKELLCIRVLGGSKRRYAYLGDTIVCTVKDAIPGGNVKKGEVVKAVVVRTVKSHRRPDGSYIKFDENAAVLLKGDGEPRGTRIFGPIARELREKKFMRIVSLAPEVI</sequence>
<keyword id="KW-0002">3D-structure</keyword>
<keyword id="KW-0687">Ribonucleoprotein</keyword>
<keyword id="KW-0689">Ribosomal protein</keyword>
<keyword id="KW-0694">RNA-binding</keyword>
<keyword id="KW-0699">rRNA-binding</keyword>